<dbReference type="EMBL" id="CP002432">
    <property type="protein sequence ID" value="ADU67082.1"/>
    <property type="molecule type" value="Genomic_DNA"/>
</dbReference>
<dbReference type="RefSeq" id="WP_013506955.1">
    <property type="nucleotide sequence ID" value="NC_014836.1"/>
</dbReference>
<dbReference type="SMR" id="E6W4K9"/>
<dbReference type="FunCoup" id="E6W4K9">
    <property type="interactions" value="226"/>
</dbReference>
<dbReference type="STRING" id="653733.Selin_2366"/>
<dbReference type="KEGG" id="din:Selin_2366"/>
<dbReference type="eggNOG" id="COG0341">
    <property type="taxonomic scope" value="Bacteria"/>
</dbReference>
<dbReference type="HOGENOM" id="CLU_050012_0_1_0"/>
<dbReference type="InParanoid" id="E6W4K9"/>
<dbReference type="OrthoDB" id="9774769at2"/>
<dbReference type="Proteomes" id="UP000002572">
    <property type="component" value="Chromosome"/>
</dbReference>
<dbReference type="GO" id="GO:0005886">
    <property type="term" value="C:plasma membrane"/>
    <property type="evidence" value="ECO:0007669"/>
    <property type="project" value="UniProtKB-SubCell"/>
</dbReference>
<dbReference type="GO" id="GO:0015450">
    <property type="term" value="F:protein-transporting ATPase activity"/>
    <property type="evidence" value="ECO:0007669"/>
    <property type="project" value="InterPro"/>
</dbReference>
<dbReference type="GO" id="GO:0065002">
    <property type="term" value="P:intracellular protein transmembrane transport"/>
    <property type="evidence" value="ECO:0007669"/>
    <property type="project" value="UniProtKB-UniRule"/>
</dbReference>
<dbReference type="GO" id="GO:0006605">
    <property type="term" value="P:protein targeting"/>
    <property type="evidence" value="ECO:0007669"/>
    <property type="project" value="UniProtKB-UniRule"/>
</dbReference>
<dbReference type="GO" id="GO:0043952">
    <property type="term" value="P:protein transport by the Sec complex"/>
    <property type="evidence" value="ECO:0007669"/>
    <property type="project" value="UniProtKB-UniRule"/>
</dbReference>
<dbReference type="Gene3D" id="1.20.1640.10">
    <property type="entry name" value="Multidrug efflux transporter AcrB transmembrane domain"/>
    <property type="match status" value="1"/>
</dbReference>
<dbReference type="HAMAP" id="MF_01464_B">
    <property type="entry name" value="SecF_B"/>
    <property type="match status" value="1"/>
</dbReference>
<dbReference type="InterPro" id="IPR022813">
    <property type="entry name" value="SecD/SecF_arch_bac"/>
</dbReference>
<dbReference type="InterPro" id="IPR022645">
    <property type="entry name" value="SecD/SecF_bac"/>
</dbReference>
<dbReference type="InterPro" id="IPR022646">
    <property type="entry name" value="SecD/SecF_CS"/>
</dbReference>
<dbReference type="InterPro" id="IPR048634">
    <property type="entry name" value="SecD_SecF_C"/>
</dbReference>
<dbReference type="InterPro" id="IPR055344">
    <property type="entry name" value="SecD_SecF_C_bact"/>
</dbReference>
<dbReference type="InterPro" id="IPR005665">
    <property type="entry name" value="SecF_bac"/>
</dbReference>
<dbReference type="NCBIfam" id="TIGR00916">
    <property type="entry name" value="2A0604s01"/>
    <property type="match status" value="1"/>
</dbReference>
<dbReference type="NCBIfam" id="TIGR00966">
    <property type="entry name" value="transloc_SecF"/>
    <property type="match status" value="1"/>
</dbReference>
<dbReference type="PANTHER" id="PTHR30081:SF8">
    <property type="entry name" value="PROTEIN TRANSLOCASE SUBUNIT SECF"/>
    <property type="match status" value="1"/>
</dbReference>
<dbReference type="PANTHER" id="PTHR30081">
    <property type="entry name" value="PROTEIN-EXPORT MEMBRANE PROTEIN SEC"/>
    <property type="match status" value="1"/>
</dbReference>
<dbReference type="Pfam" id="PF07549">
    <property type="entry name" value="Sec_GG"/>
    <property type="match status" value="1"/>
</dbReference>
<dbReference type="Pfam" id="PF02355">
    <property type="entry name" value="SecD_SecF_C"/>
    <property type="match status" value="1"/>
</dbReference>
<dbReference type="PRINTS" id="PR01755">
    <property type="entry name" value="SECFTRNLCASE"/>
</dbReference>
<dbReference type="SUPFAM" id="SSF82866">
    <property type="entry name" value="Multidrug efflux transporter AcrB transmembrane domain"/>
    <property type="match status" value="1"/>
</dbReference>
<feature type="chain" id="PRO_0000412693" description="Protein translocase subunit SecF">
    <location>
        <begin position="1"/>
        <end position="314"/>
    </location>
</feature>
<feature type="transmembrane region" description="Helical" evidence="1">
    <location>
        <begin position="17"/>
        <end position="37"/>
    </location>
</feature>
<feature type="transmembrane region" description="Helical" evidence="1">
    <location>
        <begin position="137"/>
        <end position="157"/>
    </location>
</feature>
<feature type="transmembrane region" description="Helical" evidence="1">
    <location>
        <begin position="158"/>
        <end position="178"/>
    </location>
</feature>
<feature type="transmembrane region" description="Helical" evidence="1">
    <location>
        <begin position="188"/>
        <end position="210"/>
    </location>
</feature>
<feature type="transmembrane region" description="Helical" evidence="1">
    <location>
        <begin position="250"/>
        <end position="270"/>
    </location>
</feature>
<feature type="transmembrane region" description="Helical" evidence="1">
    <location>
        <begin position="272"/>
        <end position="292"/>
    </location>
</feature>
<comment type="function">
    <text evidence="1">Part of the Sec protein translocase complex. Interacts with the SecYEG preprotein conducting channel. SecDF uses the proton motive force (PMF) to complete protein translocation after the ATP-dependent function of SecA.</text>
</comment>
<comment type="subunit">
    <text evidence="1">Forms a complex with SecD. Part of the essential Sec protein translocation apparatus which comprises SecA, SecYEG and auxiliary proteins SecDF. Other proteins may also be involved.</text>
</comment>
<comment type="subcellular location">
    <subcellularLocation>
        <location evidence="1">Cell inner membrane</location>
        <topology evidence="1">Multi-pass membrane protein</topology>
    </subcellularLocation>
</comment>
<comment type="similarity">
    <text evidence="1">Belongs to the SecD/SecF family. SecF subfamily.</text>
</comment>
<proteinExistence type="inferred from homology"/>
<reference key="1">
    <citation type="submission" date="2010-12" db="EMBL/GenBank/DDBJ databases">
        <title>Complete sequence of Desulfurispirillum indicum S5.</title>
        <authorList>
            <consortium name="US DOE Joint Genome Institute"/>
            <person name="Lucas S."/>
            <person name="Copeland A."/>
            <person name="Lapidus A."/>
            <person name="Cheng J.-F."/>
            <person name="Goodwin L."/>
            <person name="Pitluck S."/>
            <person name="Chertkov O."/>
            <person name="Held B."/>
            <person name="Detter J.C."/>
            <person name="Han C."/>
            <person name="Tapia R."/>
            <person name="Land M."/>
            <person name="Hauser L."/>
            <person name="Kyrpides N."/>
            <person name="Ivanova N."/>
            <person name="Mikhailova N."/>
            <person name="Haggblom M."/>
            <person name="Rauschenbach I."/>
            <person name="Bini E."/>
            <person name="Woyke T."/>
        </authorList>
    </citation>
    <scope>NUCLEOTIDE SEQUENCE [LARGE SCALE GENOMIC DNA]</scope>
    <source>
        <strain>ATCC BAA-1389 / DSM 22839 / S5</strain>
    </source>
</reference>
<accession>E6W4K9</accession>
<sequence length="314" mass="34679">MRLRFYYIPFMRLRTYAVAVSAILVAIALISMGTRGLNFGIDFTGGALVQLEFQQPPVIEEIRSHLSAVGLGDSTIQHFGSDREILVRAPIISDESAAAMELISLIRETLSAQYGDQMDVLRIETVGPRVGGELREQGTYAILYALLAIVAYIWWRYELNFGVAAVIALVHDVVITLGIFSLAGVTFSLPVLAAILTVIGYSLNDTIVVFDRIRENLYIPEGKEKPSIISIINTSITETLSRTILTSGTTLIVVAVLYFFGGEVINGFAFTLLVGIIVGTYSSIFVASLLLVYWRPRYIEPHLKKLQEKPEEVV</sequence>
<name>SECF_DESIS</name>
<keyword id="KW-0997">Cell inner membrane</keyword>
<keyword id="KW-1003">Cell membrane</keyword>
<keyword id="KW-0472">Membrane</keyword>
<keyword id="KW-0653">Protein transport</keyword>
<keyword id="KW-1185">Reference proteome</keyword>
<keyword id="KW-0811">Translocation</keyword>
<keyword id="KW-0812">Transmembrane</keyword>
<keyword id="KW-1133">Transmembrane helix</keyword>
<keyword id="KW-0813">Transport</keyword>
<evidence type="ECO:0000255" key="1">
    <source>
        <dbReference type="HAMAP-Rule" id="MF_01464"/>
    </source>
</evidence>
<organism>
    <name type="scientific">Desulfurispirillum indicum (strain ATCC BAA-1389 / DSM 22839 / S5)</name>
    <dbReference type="NCBI Taxonomy" id="653733"/>
    <lineage>
        <taxon>Bacteria</taxon>
        <taxon>Pseudomonadati</taxon>
        <taxon>Chrysiogenota</taxon>
        <taxon>Chrysiogenia</taxon>
        <taxon>Chrysiogenales</taxon>
        <taxon>Chrysiogenaceae</taxon>
        <taxon>Desulfurispirillum</taxon>
    </lineage>
</organism>
<gene>
    <name evidence="1" type="primary">secF</name>
    <name type="ordered locus">Selin_2366</name>
</gene>
<protein>
    <recommendedName>
        <fullName>Protein translocase subunit SecF</fullName>
    </recommendedName>
</protein>